<organism>
    <name type="scientific">Saccharolobus solfataricus (strain ATCC 35092 / DSM 1617 / JCM 11322 / P2)</name>
    <name type="common">Sulfolobus solfataricus</name>
    <dbReference type="NCBI Taxonomy" id="273057"/>
    <lineage>
        <taxon>Archaea</taxon>
        <taxon>Thermoproteota</taxon>
        <taxon>Thermoprotei</taxon>
        <taxon>Sulfolobales</taxon>
        <taxon>Sulfolobaceae</taxon>
        <taxon>Saccharolobus</taxon>
    </lineage>
</organism>
<evidence type="ECO:0000255" key="1">
    <source>
        <dbReference type="HAMAP-Rule" id="MF_01475"/>
    </source>
</evidence>
<evidence type="ECO:0000256" key="2">
    <source>
        <dbReference type="SAM" id="MobiDB-lite"/>
    </source>
</evidence>
<evidence type="ECO:0000305" key="3"/>
<name>RL19E_SACS2</name>
<protein>
    <recommendedName>
        <fullName evidence="1">Large ribosomal subunit protein eL19</fullName>
    </recommendedName>
    <alternativeName>
        <fullName evidence="3">50S ribosomal protein L19e</fullName>
    </alternativeName>
</protein>
<comment type="function">
    <text evidence="1">Binds to the 23S rRNA.</text>
</comment>
<comment type="subunit">
    <text evidence="1">Part of the 50S ribosomal subunit.</text>
</comment>
<comment type="similarity">
    <text evidence="1">Belongs to the eukaryotic ribosomal protein eL19 family.</text>
</comment>
<gene>
    <name evidence="1" type="primary">rpl19e</name>
    <name type="ordered locus">SSO0700</name>
    <name type="ORF">C10_030</name>
</gene>
<feature type="chain" id="PRO_0000131196" description="Large ribosomal subunit protein eL19">
    <location>
        <begin position="1"/>
        <end position="151"/>
    </location>
</feature>
<feature type="region of interest" description="Disordered" evidence="2">
    <location>
        <begin position="62"/>
        <end position="93"/>
    </location>
</feature>
<feature type="compositionally biased region" description="Basic residues" evidence="2">
    <location>
        <begin position="79"/>
        <end position="88"/>
    </location>
</feature>
<sequence length="151" mass="17286">MTNLKAQKRLAASIAGVGINRIKVVEDYIEDVQSSLTRDEIRNLIKDGKIIVLKKVGISGGRLKERRKKRSLKSEGKKSGSRKGKKGARANSKQMWVKRVRKIRAYLKWLRDHKVIDRHTYRELYLKTKGGNYKGVSDVRNVLIQMGKIKG</sequence>
<reference key="1">
    <citation type="journal article" date="2000" name="Genome">
        <title>Gene content and organization of a 281-kbp contig from the genome of the extremely thermophilic archaeon, Sulfolobus solfataricus P2.</title>
        <authorList>
            <person name="Charlebois R.L."/>
            <person name="Singh R.K."/>
            <person name="Chan-Weiher C.C.-Y."/>
            <person name="Allard G."/>
            <person name="Chow C."/>
            <person name="Confalonieri F."/>
            <person name="Curtis B."/>
            <person name="Duguet M."/>
            <person name="Erauso G."/>
            <person name="Faguy D."/>
            <person name="Gaasterland T."/>
            <person name="Garrett R.A."/>
            <person name="Gordon P."/>
            <person name="Jeffries A.C."/>
            <person name="Kozera C."/>
            <person name="Kushwaha N."/>
            <person name="Lafleur E."/>
            <person name="Medina N."/>
            <person name="Peng X."/>
            <person name="Penny S.L."/>
            <person name="She Q."/>
            <person name="St Jean A."/>
            <person name="van der Oost J."/>
            <person name="Young F."/>
            <person name="Zivanovic Y."/>
            <person name="Doolittle W.F."/>
            <person name="Ragan M.A."/>
            <person name="Sensen C.W."/>
        </authorList>
    </citation>
    <scope>NUCLEOTIDE SEQUENCE [LARGE SCALE GENOMIC DNA]</scope>
    <source>
        <strain>ATCC 35092 / DSM 1617 / JCM 11322 / P2</strain>
    </source>
</reference>
<reference key="2">
    <citation type="journal article" date="2001" name="Proc. Natl. Acad. Sci. U.S.A.">
        <title>The complete genome of the crenarchaeon Sulfolobus solfataricus P2.</title>
        <authorList>
            <person name="She Q."/>
            <person name="Singh R.K."/>
            <person name="Confalonieri F."/>
            <person name="Zivanovic Y."/>
            <person name="Allard G."/>
            <person name="Awayez M.J."/>
            <person name="Chan-Weiher C.C.-Y."/>
            <person name="Clausen I.G."/>
            <person name="Curtis B.A."/>
            <person name="De Moors A."/>
            <person name="Erauso G."/>
            <person name="Fletcher C."/>
            <person name="Gordon P.M.K."/>
            <person name="Heikamp-de Jong I."/>
            <person name="Jeffries A.C."/>
            <person name="Kozera C.J."/>
            <person name="Medina N."/>
            <person name="Peng X."/>
            <person name="Thi-Ngoc H.P."/>
            <person name="Redder P."/>
            <person name="Schenk M.E."/>
            <person name="Theriault C."/>
            <person name="Tolstrup N."/>
            <person name="Charlebois R.L."/>
            <person name="Doolittle W.F."/>
            <person name="Duguet M."/>
            <person name="Gaasterland T."/>
            <person name="Garrett R.A."/>
            <person name="Ragan M.A."/>
            <person name="Sensen C.W."/>
            <person name="Van der Oost J."/>
        </authorList>
    </citation>
    <scope>NUCLEOTIDE SEQUENCE [LARGE SCALE GENOMIC DNA]</scope>
    <source>
        <strain>ATCC 35092 / DSM 1617 / JCM 11322 / P2</strain>
    </source>
</reference>
<accession>Q9UX89</accession>
<keyword id="KW-1185">Reference proteome</keyword>
<keyword id="KW-0687">Ribonucleoprotein</keyword>
<keyword id="KW-0689">Ribosomal protein</keyword>
<keyword id="KW-0694">RNA-binding</keyword>
<keyword id="KW-0699">rRNA-binding</keyword>
<proteinExistence type="inferred from homology"/>
<dbReference type="EMBL" id="Y18930">
    <property type="protein sequence ID" value="CAB57603.1"/>
    <property type="molecule type" value="Genomic_DNA"/>
</dbReference>
<dbReference type="EMBL" id="AE006641">
    <property type="protein sequence ID" value="AAK41001.1"/>
    <property type="molecule type" value="Genomic_DNA"/>
</dbReference>
<dbReference type="PIR" id="B90218">
    <property type="entry name" value="B90218"/>
</dbReference>
<dbReference type="RefSeq" id="WP_009991257.1">
    <property type="nucleotide sequence ID" value="NC_002754.1"/>
</dbReference>
<dbReference type="SMR" id="Q9UX89"/>
<dbReference type="FunCoup" id="Q9UX89">
    <property type="interactions" value="273"/>
</dbReference>
<dbReference type="STRING" id="273057.SSO0700"/>
<dbReference type="PaxDb" id="273057-SSO0700"/>
<dbReference type="EnsemblBacteria" id="AAK41001">
    <property type="protein sequence ID" value="AAK41001"/>
    <property type="gene ID" value="SSO0700"/>
</dbReference>
<dbReference type="KEGG" id="sso:SSO0700"/>
<dbReference type="PATRIC" id="fig|273057.12.peg.700"/>
<dbReference type="eggNOG" id="arCOG04089">
    <property type="taxonomic scope" value="Archaea"/>
</dbReference>
<dbReference type="HOGENOM" id="CLU_083919_1_1_2"/>
<dbReference type="InParanoid" id="Q9UX89"/>
<dbReference type="PhylomeDB" id="Q9UX89"/>
<dbReference type="Proteomes" id="UP000001974">
    <property type="component" value="Chromosome"/>
</dbReference>
<dbReference type="GO" id="GO:0022625">
    <property type="term" value="C:cytosolic large ribosomal subunit"/>
    <property type="evidence" value="ECO:0000318"/>
    <property type="project" value="GO_Central"/>
</dbReference>
<dbReference type="GO" id="GO:0070180">
    <property type="term" value="F:large ribosomal subunit rRNA binding"/>
    <property type="evidence" value="ECO:0007669"/>
    <property type="project" value="UniProtKB-UniRule"/>
</dbReference>
<dbReference type="GO" id="GO:0003723">
    <property type="term" value="F:RNA binding"/>
    <property type="evidence" value="ECO:0000318"/>
    <property type="project" value="GO_Central"/>
</dbReference>
<dbReference type="GO" id="GO:0003735">
    <property type="term" value="F:structural constituent of ribosome"/>
    <property type="evidence" value="ECO:0000318"/>
    <property type="project" value="GO_Central"/>
</dbReference>
<dbReference type="GO" id="GO:0006412">
    <property type="term" value="P:translation"/>
    <property type="evidence" value="ECO:0007669"/>
    <property type="project" value="UniProtKB-UniRule"/>
</dbReference>
<dbReference type="CDD" id="cd01418">
    <property type="entry name" value="Ribosomal_L19e_A"/>
    <property type="match status" value="1"/>
</dbReference>
<dbReference type="FunFam" id="1.10.1200.240:FF:000003">
    <property type="entry name" value="50S ribosomal protein L19e"/>
    <property type="match status" value="1"/>
</dbReference>
<dbReference type="Gene3D" id="1.10.1200.240">
    <property type="match status" value="1"/>
</dbReference>
<dbReference type="Gene3D" id="1.10.1650.10">
    <property type="match status" value="1"/>
</dbReference>
<dbReference type="HAMAP" id="MF_01475">
    <property type="entry name" value="Ribosomal_eL19"/>
    <property type="match status" value="1"/>
</dbReference>
<dbReference type="InterPro" id="IPR035970">
    <property type="entry name" value="60S_ribosomal_eL19_sf"/>
</dbReference>
<dbReference type="InterPro" id="IPR039547">
    <property type="entry name" value="Ribosomal_eL19"/>
</dbReference>
<dbReference type="InterPro" id="IPR033936">
    <property type="entry name" value="Ribosomal_eL19_arc"/>
</dbReference>
<dbReference type="InterPro" id="IPR023638">
    <property type="entry name" value="Ribosomal_eL19_CS"/>
</dbReference>
<dbReference type="InterPro" id="IPR000196">
    <property type="entry name" value="Ribosomal_eL19_dom"/>
</dbReference>
<dbReference type="InterPro" id="IPR015972">
    <property type="entry name" value="Ribosomal_eL19_dom1"/>
</dbReference>
<dbReference type="NCBIfam" id="NF006343">
    <property type="entry name" value="PRK08570.1"/>
    <property type="match status" value="1"/>
</dbReference>
<dbReference type="PANTHER" id="PTHR10722">
    <property type="entry name" value="60S RIBOSOMAL PROTEIN L19"/>
    <property type="match status" value="1"/>
</dbReference>
<dbReference type="Pfam" id="PF01280">
    <property type="entry name" value="Ribosomal_L19e"/>
    <property type="match status" value="1"/>
</dbReference>
<dbReference type="Pfam" id="PF25476">
    <property type="entry name" value="Ribosomal_L19e_C"/>
    <property type="match status" value="1"/>
</dbReference>
<dbReference type="SMART" id="SM01416">
    <property type="entry name" value="Ribosomal_L19e"/>
    <property type="match status" value="1"/>
</dbReference>
<dbReference type="SUPFAM" id="SSF48140">
    <property type="entry name" value="Ribosomal protein L19 (L19e)"/>
    <property type="match status" value="1"/>
</dbReference>
<dbReference type="PROSITE" id="PS00526">
    <property type="entry name" value="RIBOSOMAL_L19E"/>
    <property type="match status" value="1"/>
</dbReference>